<protein>
    <recommendedName>
        <fullName evidence="2">Conotoxin Cal6.1g</fullName>
    </recommendedName>
</protein>
<evidence type="ECO:0000250" key="1"/>
<evidence type="ECO:0000303" key="2">
    <source>
    </source>
</evidence>
<evidence type="ECO:0000305" key="3"/>
<evidence type="ECO:0000305" key="4">
    <source>
    </source>
</evidence>
<sequence length="35" mass="3861">GLSRPSKRCIAGGQPCEFHRGYMCCSEHCIIFVCA</sequence>
<organism>
    <name type="scientific">Californiconus californicus</name>
    <name type="common">California cone</name>
    <name type="synonym">Conus californicus</name>
    <dbReference type="NCBI Taxonomy" id="1736779"/>
    <lineage>
        <taxon>Eukaryota</taxon>
        <taxon>Metazoa</taxon>
        <taxon>Spiralia</taxon>
        <taxon>Lophotrochozoa</taxon>
        <taxon>Mollusca</taxon>
        <taxon>Gastropoda</taxon>
        <taxon>Caenogastropoda</taxon>
        <taxon>Neogastropoda</taxon>
        <taxon>Conoidea</taxon>
        <taxon>Conidae</taxon>
        <taxon>Californiconus</taxon>
    </lineage>
</organism>
<accession>D2Y4A1</accession>
<name>O16G_CONCL</name>
<feature type="propeptide" id="PRO_5000566326" evidence="4">
    <location>
        <begin position="1" status="less than"/>
        <end position="8"/>
    </location>
</feature>
<feature type="peptide" id="PRO_5000566327" description="Conotoxin Cal6.1g" evidence="4">
    <location>
        <begin position="9"/>
        <end position="35"/>
    </location>
</feature>
<feature type="disulfide bond" evidence="1">
    <location>
        <begin position="9"/>
        <end position="25"/>
    </location>
</feature>
<feature type="disulfide bond" evidence="1">
    <location>
        <begin position="16"/>
        <end position="29"/>
    </location>
</feature>
<feature type="disulfide bond" evidence="1">
    <location>
        <begin position="24"/>
        <end position="34"/>
    </location>
</feature>
<feature type="non-terminal residue">
    <location>
        <position position="1"/>
    </location>
</feature>
<keyword id="KW-0165">Cleavage on pair of basic residues</keyword>
<keyword id="KW-1015">Disulfide bond</keyword>
<keyword id="KW-0872">Ion channel impairing toxin</keyword>
<keyword id="KW-0960">Knottin</keyword>
<keyword id="KW-0528">Neurotoxin</keyword>
<keyword id="KW-0964">Secreted</keyword>
<keyword id="KW-0800">Toxin</keyword>
<dbReference type="EMBL" id="GU306166">
    <property type="protein sequence ID" value="ADB04244.1"/>
    <property type="molecule type" value="mRNA"/>
</dbReference>
<dbReference type="SMR" id="D2Y4A1"/>
<dbReference type="ConoServer" id="3975">
    <property type="toxin name" value="Cal6.1g precursor"/>
</dbReference>
<dbReference type="GO" id="GO:0005576">
    <property type="term" value="C:extracellular region"/>
    <property type="evidence" value="ECO:0007669"/>
    <property type="project" value="UniProtKB-SubCell"/>
</dbReference>
<dbReference type="GO" id="GO:0099106">
    <property type="term" value="F:ion channel regulator activity"/>
    <property type="evidence" value="ECO:0007669"/>
    <property type="project" value="UniProtKB-KW"/>
</dbReference>
<dbReference type="GO" id="GO:0090729">
    <property type="term" value="F:toxin activity"/>
    <property type="evidence" value="ECO:0007669"/>
    <property type="project" value="UniProtKB-KW"/>
</dbReference>
<reference key="1">
    <citation type="journal article" date="2011" name="Toxicon">
        <title>Diversity of conotoxin types from Conus californicus reflects a diversity of prey types and a novel evolutionary history.</title>
        <authorList>
            <person name="Elliger C.A."/>
            <person name="Richmond T.A."/>
            <person name="Lebaric Z.N."/>
            <person name="Pierce N.T."/>
            <person name="Sweedler J.V."/>
            <person name="Gilly W.F."/>
        </authorList>
    </citation>
    <scope>NUCLEOTIDE SEQUENCE [MRNA]</scope>
    <source>
        <tissue>Venom duct</tissue>
    </source>
</reference>
<comment type="function">
    <text evidence="3">Probable neurotoxin with unknown target. Possibly targets ion channels.</text>
</comment>
<comment type="subcellular location">
    <subcellularLocation>
        <location evidence="4">Secreted</location>
    </subcellularLocation>
</comment>
<comment type="tissue specificity">
    <text evidence="4">Expressed by the venom duct.</text>
</comment>
<comment type="domain">
    <text evidence="1">The presence of a 'disulfide through disulfide knot' structurally defines this protein as a knottin.</text>
</comment>
<comment type="domain">
    <text>The cysteine framework is VI/VII (C-C-CC-C-C).</text>
</comment>
<comment type="similarity">
    <text evidence="3">Belongs to the conotoxin O1 superfamily.</text>
</comment>
<proteinExistence type="evidence at transcript level"/>